<gene>
    <name evidence="1" type="primary">rplO</name>
    <name type="ordered locus">DMR_12390</name>
</gene>
<accession>C4XLZ2</accession>
<protein>
    <recommendedName>
        <fullName evidence="1">Large ribosomal subunit protein uL15</fullName>
    </recommendedName>
    <alternativeName>
        <fullName evidence="3">50S ribosomal protein L15</fullName>
    </alternativeName>
</protein>
<name>RL15_SOLM1</name>
<evidence type="ECO:0000255" key="1">
    <source>
        <dbReference type="HAMAP-Rule" id="MF_01341"/>
    </source>
</evidence>
<evidence type="ECO:0000256" key="2">
    <source>
        <dbReference type="SAM" id="MobiDB-lite"/>
    </source>
</evidence>
<evidence type="ECO:0000305" key="3"/>
<feature type="chain" id="PRO_1000214701" description="Large ribosomal subunit protein uL15">
    <location>
        <begin position="1"/>
        <end position="159"/>
    </location>
</feature>
<feature type="region of interest" description="Disordered" evidence="2">
    <location>
        <begin position="14"/>
        <end position="44"/>
    </location>
</feature>
<feature type="compositionally biased region" description="Gly residues" evidence="2">
    <location>
        <begin position="23"/>
        <end position="35"/>
    </location>
</feature>
<dbReference type="EMBL" id="AP010904">
    <property type="protein sequence ID" value="BAH74730.1"/>
    <property type="molecule type" value="Genomic_DNA"/>
</dbReference>
<dbReference type="RefSeq" id="WP_015859945.1">
    <property type="nucleotide sequence ID" value="NC_012796.1"/>
</dbReference>
<dbReference type="SMR" id="C4XLZ2"/>
<dbReference type="STRING" id="573370.DMR_12390"/>
<dbReference type="KEGG" id="dma:DMR_12390"/>
<dbReference type="eggNOG" id="COG0200">
    <property type="taxonomic scope" value="Bacteria"/>
</dbReference>
<dbReference type="HOGENOM" id="CLU_055188_4_2_7"/>
<dbReference type="OrthoDB" id="9810293at2"/>
<dbReference type="Proteomes" id="UP000009071">
    <property type="component" value="Chromosome"/>
</dbReference>
<dbReference type="GO" id="GO:0015934">
    <property type="term" value="C:large ribosomal subunit"/>
    <property type="evidence" value="ECO:0007669"/>
    <property type="project" value="InterPro"/>
</dbReference>
<dbReference type="GO" id="GO:0019843">
    <property type="term" value="F:rRNA binding"/>
    <property type="evidence" value="ECO:0007669"/>
    <property type="project" value="UniProtKB-UniRule"/>
</dbReference>
<dbReference type="GO" id="GO:0003735">
    <property type="term" value="F:structural constituent of ribosome"/>
    <property type="evidence" value="ECO:0007669"/>
    <property type="project" value="InterPro"/>
</dbReference>
<dbReference type="GO" id="GO:0006412">
    <property type="term" value="P:translation"/>
    <property type="evidence" value="ECO:0007669"/>
    <property type="project" value="UniProtKB-UniRule"/>
</dbReference>
<dbReference type="Gene3D" id="3.100.10.10">
    <property type="match status" value="1"/>
</dbReference>
<dbReference type="HAMAP" id="MF_01341">
    <property type="entry name" value="Ribosomal_uL15"/>
    <property type="match status" value="1"/>
</dbReference>
<dbReference type="InterPro" id="IPR030878">
    <property type="entry name" value="Ribosomal_uL15"/>
</dbReference>
<dbReference type="InterPro" id="IPR021131">
    <property type="entry name" value="Ribosomal_uL15/eL18"/>
</dbReference>
<dbReference type="InterPro" id="IPR036227">
    <property type="entry name" value="Ribosomal_uL15/eL18_sf"/>
</dbReference>
<dbReference type="InterPro" id="IPR005749">
    <property type="entry name" value="Ribosomal_uL15_bac-type"/>
</dbReference>
<dbReference type="InterPro" id="IPR001196">
    <property type="entry name" value="Ribosomal_uL15_CS"/>
</dbReference>
<dbReference type="NCBIfam" id="TIGR01071">
    <property type="entry name" value="rplO_bact"/>
    <property type="match status" value="1"/>
</dbReference>
<dbReference type="PANTHER" id="PTHR12934">
    <property type="entry name" value="50S RIBOSOMAL PROTEIN L15"/>
    <property type="match status" value="1"/>
</dbReference>
<dbReference type="PANTHER" id="PTHR12934:SF11">
    <property type="entry name" value="LARGE RIBOSOMAL SUBUNIT PROTEIN UL15M"/>
    <property type="match status" value="1"/>
</dbReference>
<dbReference type="Pfam" id="PF00828">
    <property type="entry name" value="Ribosomal_L27A"/>
    <property type="match status" value="1"/>
</dbReference>
<dbReference type="SUPFAM" id="SSF52080">
    <property type="entry name" value="Ribosomal proteins L15p and L18e"/>
    <property type="match status" value="1"/>
</dbReference>
<dbReference type="PROSITE" id="PS00475">
    <property type="entry name" value="RIBOSOMAL_L15"/>
    <property type="match status" value="1"/>
</dbReference>
<proteinExistence type="inferred from homology"/>
<organism>
    <name type="scientific">Solidesulfovibrio magneticus (strain ATCC 700980 / DSM 13731 / RS-1)</name>
    <name type="common">Desulfovibrio magneticus</name>
    <dbReference type="NCBI Taxonomy" id="573370"/>
    <lineage>
        <taxon>Bacteria</taxon>
        <taxon>Pseudomonadati</taxon>
        <taxon>Thermodesulfobacteriota</taxon>
        <taxon>Desulfovibrionia</taxon>
        <taxon>Desulfovibrionales</taxon>
        <taxon>Desulfovibrionaceae</taxon>
        <taxon>Solidesulfovibrio</taxon>
    </lineage>
</organism>
<sequence>MKLHELYPFPEERASRKRVGRGRATGWGCTSGRGNKGQNSRAGAKHRAWFEGGQMPIARRLPKRGFKNYPFKVVFQPINLDRLLASFDGKDAITLDDIYDRGLAPAGALVKILSVGEVAAAVTVEAHKFSAKAAEKITAAGGKVIALGTPEALTETPTE</sequence>
<comment type="function">
    <text evidence="1">Binds to the 23S rRNA.</text>
</comment>
<comment type="subunit">
    <text evidence="1">Part of the 50S ribosomal subunit.</text>
</comment>
<comment type="similarity">
    <text evidence="1">Belongs to the universal ribosomal protein uL15 family.</text>
</comment>
<keyword id="KW-0687">Ribonucleoprotein</keyword>
<keyword id="KW-0689">Ribosomal protein</keyword>
<keyword id="KW-0694">RNA-binding</keyword>
<keyword id="KW-0699">rRNA-binding</keyword>
<reference key="1">
    <citation type="journal article" date="2009" name="Genome Res.">
        <title>Whole genome sequence of Desulfovibrio magneticus strain RS-1 revealed common gene clusters in magnetotactic bacteria.</title>
        <authorList>
            <person name="Nakazawa H."/>
            <person name="Arakaki A."/>
            <person name="Narita-Yamada S."/>
            <person name="Yashiro I."/>
            <person name="Jinno K."/>
            <person name="Aoki N."/>
            <person name="Tsuruyama A."/>
            <person name="Okamura Y."/>
            <person name="Tanikawa S."/>
            <person name="Fujita N."/>
            <person name="Takeyama H."/>
            <person name="Matsunaga T."/>
        </authorList>
    </citation>
    <scope>NUCLEOTIDE SEQUENCE [LARGE SCALE GENOMIC DNA]</scope>
    <source>
        <strain>ATCC 700980 / DSM 13731 / RS-1</strain>
    </source>
</reference>